<feature type="chain" id="PRO_0000243778" description="Small ribosomal subunit protein bS16">
    <location>
        <begin position="1"/>
        <end position="127"/>
    </location>
</feature>
<feature type="region of interest" description="Disordered" evidence="2">
    <location>
        <begin position="80"/>
        <end position="127"/>
    </location>
</feature>
<feature type="compositionally biased region" description="Basic residues" evidence="2">
    <location>
        <begin position="81"/>
        <end position="90"/>
    </location>
</feature>
<feature type="compositionally biased region" description="Basic and acidic residues" evidence="2">
    <location>
        <begin position="91"/>
        <end position="101"/>
    </location>
</feature>
<feature type="compositionally biased region" description="Low complexity" evidence="2">
    <location>
        <begin position="102"/>
        <end position="121"/>
    </location>
</feature>
<gene>
    <name evidence="1" type="primary">rpsP</name>
    <name type="ordered locus">BH16020</name>
</gene>
<proteinExistence type="inferred from homology"/>
<comment type="similarity">
    <text evidence="1">Belongs to the bacterial ribosomal protein bS16 family.</text>
</comment>
<evidence type="ECO:0000255" key="1">
    <source>
        <dbReference type="HAMAP-Rule" id="MF_00385"/>
    </source>
</evidence>
<evidence type="ECO:0000256" key="2">
    <source>
        <dbReference type="SAM" id="MobiDB-lite"/>
    </source>
</evidence>
<evidence type="ECO:0000305" key="3"/>
<sequence length="127" mass="14153">MALKIRLSRGGSKKRPYYHIIVADARSPRDGRFLERVGAWDPMLPKDGPRVKLNEERIQYWLGQGAQPTDRVLRFLDAAGLKKRPTRNNPHKGEPGKKAQERIAAAKQAAEEAAAAKTESAPISEEV</sequence>
<protein>
    <recommendedName>
        <fullName evidence="1">Small ribosomal subunit protein bS16</fullName>
    </recommendedName>
    <alternativeName>
        <fullName evidence="3">30S ribosomal protein S16</fullName>
    </alternativeName>
</protein>
<accession>Q6G5S7</accession>
<organism>
    <name type="scientific">Bartonella henselae (strain ATCC 49882 / DSM 28221 / CCUG 30454 / Houston 1)</name>
    <name type="common">Rochalimaea henselae</name>
    <dbReference type="NCBI Taxonomy" id="283166"/>
    <lineage>
        <taxon>Bacteria</taxon>
        <taxon>Pseudomonadati</taxon>
        <taxon>Pseudomonadota</taxon>
        <taxon>Alphaproteobacteria</taxon>
        <taxon>Hyphomicrobiales</taxon>
        <taxon>Bartonellaceae</taxon>
        <taxon>Bartonella</taxon>
    </lineage>
</organism>
<keyword id="KW-0687">Ribonucleoprotein</keyword>
<keyword id="KW-0689">Ribosomal protein</keyword>
<reference key="1">
    <citation type="journal article" date="2004" name="Proc. Natl. Acad. Sci. U.S.A.">
        <title>The louse-borne human pathogen Bartonella quintana is a genomic derivative of the zoonotic agent Bartonella henselae.</title>
        <authorList>
            <person name="Alsmark U.C.M."/>
            <person name="Frank A.C."/>
            <person name="Karlberg E.O."/>
            <person name="Legault B.-A."/>
            <person name="Ardell D.H."/>
            <person name="Canbaeck B."/>
            <person name="Eriksson A.-S."/>
            <person name="Naeslund A.K."/>
            <person name="Handley S.A."/>
            <person name="Huvet M."/>
            <person name="La Scola B."/>
            <person name="Holmberg M."/>
            <person name="Andersson S.G.E."/>
        </authorList>
    </citation>
    <scope>NUCLEOTIDE SEQUENCE [LARGE SCALE GENOMIC DNA]</scope>
    <source>
        <strain>ATCC 49882 / DSM 28221 / CCUG 30454 / Houston 1</strain>
    </source>
</reference>
<dbReference type="EMBL" id="BX897699">
    <property type="protein sequence ID" value="CAF28365.1"/>
    <property type="molecule type" value="Genomic_DNA"/>
</dbReference>
<dbReference type="RefSeq" id="WP_011181365.1">
    <property type="nucleotide sequence ID" value="NZ_LRIJ02000001.1"/>
</dbReference>
<dbReference type="SMR" id="Q6G5S7"/>
<dbReference type="PaxDb" id="283166-BH16020"/>
<dbReference type="EnsemblBacteria" id="CAF28365">
    <property type="protein sequence ID" value="CAF28365"/>
    <property type="gene ID" value="BH16020"/>
</dbReference>
<dbReference type="GeneID" id="92986221"/>
<dbReference type="KEGG" id="bhe:BH16020"/>
<dbReference type="eggNOG" id="COG0228">
    <property type="taxonomic scope" value="Bacteria"/>
</dbReference>
<dbReference type="OrthoDB" id="9807878at2"/>
<dbReference type="Proteomes" id="UP000000421">
    <property type="component" value="Chromosome"/>
</dbReference>
<dbReference type="GO" id="GO:0005737">
    <property type="term" value="C:cytoplasm"/>
    <property type="evidence" value="ECO:0007669"/>
    <property type="project" value="UniProtKB-ARBA"/>
</dbReference>
<dbReference type="GO" id="GO:0015935">
    <property type="term" value="C:small ribosomal subunit"/>
    <property type="evidence" value="ECO:0007669"/>
    <property type="project" value="TreeGrafter"/>
</dbReference>
<dbReference type="GO" id="GO:0003735">
    <property type="term" value="F:structural constituent of ribosome"/>
    <property type="evidence" value="ECO:0007669"/>
    <property type="project" value="InterPro"/>
</dbReference>
<dbReference type="GO" id="GO:0006412">
    <property type="term" value="P:translation"/>
    <property type="evidence" value="ECO:0007669"/>
    <property type="project" value="UniProtKB-UniRule"/>
</dbReference>
<dbReference type="Gene3D" id="3.30.1320.10">
    <property type="match status" value="1"/>
</dbReference>
<dbReference type="HAMAP" id="MF_00385">
    <property type="entry name" value="Ribosomal_bS16"/>
    <property type="match status" value="1"/>
</dbReference>
<dbReference type="InterPro" id="IPR000307">
    <property type="entry name" value="Ribosomal_bS16"/>
</dbReference>
<dbReference type="InterPro" id="IPR023803">
    <property type="entry name" value="Ribosomal_bS16_dom_sf"/>
</dbReference>
<dbReference type="NCBIfam" id="TIGR00002">
    <property type="entry name" value="S16"/>
    <property type="match status" value="1"/>
</dbReference>
<dbReference type="PANTHER" id="PTHR12919">
    <property type="entry name" value="30S RIBOSOMAL PROTEIN S16"/>
    <property type="match status" value="1"/>
</dbReference>
<dbReference type="PANTHER" id="PTHR12919:SF20">
    <property type="entry name" value="SMALL RIBOSOMAL SUBUNIT PROTEIN BS16M"/>
    <property type="match status" value="1"/>
</dbReference>
<dbReference type="Pfam" id="PF00886">
    <property type="entry name" value="Ribosomal_S16"/>
    <property type="match status" value="1"/>
</dbReference>
<dbReference type="SUPFAM" id="SSF54565">
    <property type="entry name" value="Ribosomal protein S16"/>
    <property type="match status" value="1"/>
</dbReference>
<name>RS16_BARHE</name>